<keyword id="KW-0963">Cytoplasm</keyword>
<keyword id="KW-0460">Magnesium</keyword>
<keyword id="KW-0479">Metal-binding</keyword>
<keyword id="KW-0548">Nucleotidyltransferase</keyword>
<keyword id="KW-0694">RNA-binding</keyword>
<keyword id="KW-0808">Transferase</keyword>
<organism>
    <name type="scientific">Vibrio vulnificus (strain CMCP6)</name>
    <dbReference type="NCBI Taxonomy" id="216895"/>
    <lineage>
        <taxon>Bacteria</taxon>
        <taxon>Pseudomonadati</taxon>
        <taxon>Pseudomonadota</taxon>
        <taxon>Gammaproteobacteria</taxon>
        <taxon>Vibrionales</taxon>
        <taxon>Vibrionaceae</taxon>
        <taxon>Vibrio</taxon>
    </lineage>
</organism>
<gene>
    <name evidence="1" type="primary">pnp</name>
    <name type="ordered locus">VV1_1708</name>
</gene>
<feature type="chain" id="PRO_0000329932" description="Polyribonucleotide nucleotidyltransferase">
    <location>
        <begin position="1"/>
        <end position="708"/>
    </location>
</feature>
<feature type="domain" description="KH" evidence="1">
    <location>
        <begin position="554"/>
        <end position="613"/>
    </location>
</feature>
<feature type="domain" description="S1 motif" evidence="1">
    <location>
        <begin position="623"/>
        <end position="691"/>
    </location>
</feature>
<feature type="binding site" evidence="1">
    <location>
        <position position="487"/>
    </location>
    <ligand>
        <name>Mg(2+)</name>
        <dbReference type="ChEBI" id="CHEBI:18420"/>
    </ligand>
</feature>
<feature type="binding site" evidence="1">
    <location>
        <position position="493"/>
    </location>
    <ligand>
        <name>Mg(2+)</name>
        <dbReference type="ChEBI" id="CHEBI:18420"/>
    </ligand>
</feature>
<protein>
    <recommendedName>
        <fullName evidence="1">Polyribonucleotide nucleotidyltransferase</fullName>
        <ecNumber evidence="1">2.7.7.8</ecNumber>
    </recommendedName>
    <alternativeName>
        <fullName evidence="1">Polynucleotide phosphorylase</fullName>
        <shortName evidence="1">PNPase</shortName>
    </alternativeName>
</protein>
<evidence type="ECO:0000255" key="1">
    <source>
        <dbReference type="HAMAP-Rule" id="MF_01595"/>
    </source>
</evidence>
<dbReference type="EC" id="2.7.7.8" evidence="1"/>
<dbReference type="EMBL" id="AE016795">
    <property type="protein sequence ID" value="AAO10123.1"/>
    <property type="molecule type" value="Genomic_DNA"/>
</dbReference>
<dbReference type="RefSeq" id="WP_011079626.1">
    <property type="nucleotide sequence ID" value="NC_004459.3"/>
</dbReference>
<dbReference type="SMR" id="Q8DBU9"/>
<dbReference type="GeneID" id="93895956"/>
<dbReference type="KEGG" id="vvu:VV1_1708"/>
<dbReference type="HOGENOM" id="CLU_004217_2_2_6"/>
<dbReference type="Proteomes" id="UP000002275">
    <property type="component" value="Chromosome 1"/>
</dbReference>
<dbReference type="GO" id="GO:0005829">
    <property type="term" value="C:cytosol"/>
    <property type="evidence" value="ECO:0007669"/>
    <property type="project" value="TreeGrafter"/>
</dbReference>
<dbReference type="GO" id="GO:0000175">
    <property type="term" value="F:3'-5'-RNA exonuclease activity"/>
    <property type="evidence" value="ECO:0007669"/>
    <property type="project" value="TreeGrafter"/>
</dbReference>
<dbReference type="GO" id="GO:0000287">
    <property type="term" value="F:magnesium ion binding"/>
    <property type="evidence" value="ECO:0007669"/>
    <property type="project" value="UniProtKB-UniRule"/>
</dbReference>
<dbReference type="GO" id="GO:0004654">
    <property type="term" value="F:polyribonucleotide nucleotidyltransferase activity"/>
    <property type="evidence" value="ECO:0007669"/>
    <property type="project" value="UniProtKB-UniRule"/>
</dbReference>
<dbReference type="GO" id="GO:0003723">
    <property type="term" value="F:RNA binding"/>
    <property type="evidence" value="ECO:0007669"/>
    <property type="project" value="UniProtKB-UniRule"/>
</dbReference>
<dbReference type="GO" id="GO:0006402">
    <property type="term" value="P:mRNA catabolic process"/>
    <property type="evidence" value="ECO:0007669"/>
    <property type="project" value="UniProtKB-UniRule"/>
</dbReference>
<dbReference type="GO" id="GO:0006396">
    <property type="term" value="P:RNA processing"/>
    <property type="evidence" value="ECO:0007669"/>
    <property type="project" value="InterPro"/>
</dbReference>
<dbReference type="CDD" id="cd02393">
    <property type="entry name" value="KH-I_PNPase"/>
    <property type="match status" value="1"/>
</dbReference>
<dbReference type="CDD" id="cd11363">
    <property type="entry name" value="RNase_PH_PNPase_1"/>
    <property type="match status" value="1"/>
</dbReference>
<dbReference type="CDD" id="cd11364">
    <property type="entry name" value="RNase_PH_PNPase_2"/>
    <property type="match status" value="1"/>
</dbReference>
<dbReference type="CDD" id="cd04472">
    <property type="entry name" value="S1_PNPase"/>
    <property type="match status" value="1"/>
</dbReference>
<dbReference type="FunFam" id="2.40.50.140:FF:000023">
    <property type="entry name" value="Polyribonucleotide nucleotidyltransferase"/>
    <property type="match status" value="1"/>
</dbReference>
<dbReference type="FunFam" id="3.30.1370.10:FF:000001">
    <property type="entry name" value="Polyribonucleotide nucleotidyltransferase"/>
    <property type="match status" value="1"/>
</dbReference>
<dbReference type="FunFam" id="3.30.230.70:FF:000001">
    <property type="entry name" value="Polyribonucleotide nucleotidyltransferase"/>
    <property type="match status" value="1"/>
</dbReference>
<dbReference type="FunFam" id="3.30.230.70:FF:000002">
    <property type="entry name" value="Polyribonucleotide nucleotidyltransferase"/>
    <property type="match status" value="1"/>
</dbReference>
<dbReference type="Gene3D" id="3.30.230.70">
    <property type="entry name" value="GHMP Kinase, N-terminal domain"/>
    <property type="match status" value="2"/>
</dbReference>
<dbReference type="Gene3D" id="3.30.1370.10">
    <property type="entry name" value="K Homology domain, type 1"/>
    <property type="match status" value="1"/>
</dbReference>
<dbReference type="Gene3D" id="2.40.50.140">
    <property type="entry name" value="Nucleic acid-binding proteins"/>
    <property type="match status" value="1"/>
</dbReference>
<dbReference type="HAMAP" id="MF_01595">
    <property type="entry name" value="PNPase"/>
    <property type="match status" value="1"/>
</dbReference>
<dbReference type="InterPro" id="IPR001247">
    <property type="entry name" value="ExoRNase_PH_dom1"/>
</dbReference>
<dbReference type="InterPro" id="IPR015847">
    <property type="entry name" value="ExoRNase_PH_dom2"/>
</dbReference>
<dbReference type="InterPro" id="IPR036345">
    <property type="entry name" value="ExoRNase_PH_dom2_sf"/>
</dbReference>
<dbReference type="InterPro" id="IPR004087">
    <property type="entry name" value="KH_dom"/>
</dbReference>
<dbReference type="InterPro" id="IPR004088">
    <property type="entry name" value="KH_dom_type_1"/>
</dbReference>
<dbReference type="InterPro" id="IPR036612">
    <property type="entry name" value="KH_dom_type_1_sf"/>
</dbReference>
<dbReference type="InterPro" id="IPR012340">
    <property type="entry name" value="NA-bd_OB-fold"/>
</dbReference>
<dbReference type="InterPro" id="IPR012162">
    <property type="entry name" value="PNPase"/>
</dbReference>
<dbReference type="InterPro" id="IPR027408">
    <property type="entry name" value="PNPase/RNase_PH_dom_sf"/>
</dbReference>
<dbReference type="InterPro" id="IPR015848">
    <property type="entry name" value="PNPase_PH_RNA-bd_bac/org-type"/>
</dbReference>
<dbReference type="InterPro" id="IPR020568">
    <property type="entry name" value="Ribosomal_Su5_D2-typ_SF"/>
</dbReference>
<dbReference type="InterPro" id="IPR003029">
    <property type="entry name" value="S1_domain"/>
</dbReference>
<dbReference type="NCBIfam" id="TIGR03591">
    <property type="entry name" value="polynuc_phos"/>
    <property type="match status" value="1"/>
</dbReference>
<dbReference type="NCBIfam" id="NF008805">
    <property type="entry name" value="PRK11824.1"/>
    <property type="match status" value="1"/>
</dbReference>
<dbReference type="PANTHER" id="PTHR11252">
    <property type="entry name" value="POLYRIBONUCLEOTIDE NUCLEOTIDYLTRANSFERASE"/>
    <property type="match status" value="1"/>
</dbReference>
<dbReference type="PANTHER" id="PTHR11252:SF0">
    <property type="entry name" value="POLYRIBONUCLEOTIDE NUCLEOTIDYLTRANSFERASE 1, MITOCHONDRIAL"/>
    <property type="match status" value="1"/>
</dbReference>
<dbReference type="Pfam" id="PF00013">
    <property type="entry name" value="KH_1"/>
    <property type="match status" value="1"/>
</dbReference>
<dbReference type="Pfam" id="PF03726">
    <property type="entry name" value="PNPase"/>
    <property type="match status" value="1"/>
</dbReference>
<dbReference type="Pfam" id="PF01138">
    <property type="entry name" value="RNase_PH"/>
    <property type="match status" value="2"/>
</dbReference>
<dbReference type="Pfam" id="PF03725">
    <property type="entry name" value="RNase_PH_C"/>
    <property type="match status" value="2"/>
</dbReference>
<dbReference type="Pfam" id="PF00575">
    <property type="entry name" value="S1"/>
    <property type="match status" value="1"/>
</dbReference>
<dbReference type="PIRSF" id="PIRSF005499">
    <property type="entry name" value="PNPase"/>
    <property type="match status" value="1"/>
</dbReference>
<dbReference type="SMART" id="SM00322">
    <property type="entry name" value="KH"/>
    <property type="match status" value="1"/>
</dbReference>
<dbReference type="SMART" id="SM00316">
    <property type="entry name" value="S1"/>
    <property type="match status" value="1"/>
</dbReference>
<dbReference type="SUPFAM" id="SSF54791">
    <property type="entry name" value="Eukaryotic type KH-domain (KH-domain type I)"/>
    <property type="match status" value="1"/>
</dbReference>
<dbReference type="SUPFAM" id="SSF50249">
    <property type="entry name" value="Nucleic acid-binding proteins"/>
    <property type="match status" value="1"/>
</dbReference>
<dbReference type="SUPFAM" id="SSF55666">
    <property type="entry name" value="Ribonuclease PH domain 2-like"/>
    <property type="match status" value="2"/>
</dbReference>
<dbReference type="SUPFAM" id="SSF54211">
    <property type="entry name" value="Ribosomal protein S5 domain 2-like"/>
    <property type="match status" value="2"/>
</dbReference>
<dbReference type="PROSITE" id="PS50084">
    <property type="entry name" value="KH_TYPE_1"/>
    <property type="match status" value="1"/>
</dbReference>
<dbReference type="PROSITE" id="PS50126">
    <property type="entry name" value="S1"/>
    <property type="match status" value="1"/>
</dbReference>
<comment type="function">
    <text evidence="1">Involved in mRNA degradation. Catalyzes the phosphorolysis of single-stranded polyribonucleotides processively in the 3'- to 5'-direction.</text>
</comment>
<comment type="catalytic activity">
    <reaction evidence="1">
        <text>RNA(n+1) + phosphate = RNA(n) + a ribonucleoside 5'-diphosphate</text>
        <dbReference type="Rhea" id="RHEA:22096"/>
        <dbReference type="Rhea" id="RHEA-COMP:14527"/>
        <dbReference type="Rhea" id="RHEA-COMP:17342"/>
        <dbReference type="ChEBI" id="CHEBI:43474"/>
        <dbReference type="ChEBI" id="CHEBI:57930"/>
        <dbReference type="ChEBI" id="CHEBI:140395"/>
        <dbReference type="EC" id="2.7.7.8"/>
    </reaction>
</comment>
<comment type="cofactor">
    <cofactor evidence="1">
        <name>Mg(2+)</name>
        <dbReference type="ChEBI" id="CHEBI:18420"/>
    </cofactor>
</comment>
<comment type="subunit">
    <text evidence="1">Component of the RNA degradosome, which is a multiprotein complex involved in RNA processing and mRNA degradation.</text>
</comment>
<comment type="subcellular location">
    <subcellularLocation>
        <location evidence="1">Cytoplasm</location>
    </subcellularLocation>
</comment>
<comment type="similarity">
    <text evidence="1">Belongs to the polyribonucleotide nucleotidyltransferase family.</text>
</comment>
<proteinExistence type="inferred from homology"/>
<reference key="1">
    <citation type="submission" date="2002-12" db="EMBL/GenBank/DDBJ databases">
        <title>Complete genome sequence of Vibrio vulnificus CMCP6.</title>
        <authorList>
            <person name="Rhee J.H."/>
            <person name="Kim S.Y."/>
            <person name="Chung S.S."/>
            <person name="Kim J.J."/>
            <person name="Moon Y.H."/>
            <person name="Jeong H."/>
            <person name="Choy H.E."/>
        </authorList>
    </citation>
    <scope>NUCLEOTIDE SEQUENCE [LARGE SCALE GENOMIC DNA]</scope>
    <source>
        <strain>CMCP6</strain>
    </source>
</reference>
<accession>Q8DBU9</accession>
<name>PNP_VIBVU</name>
<sequence length="708" mass="76308">MFEKPVVKTFQYGNHTVTLETGVIARQATAAVMVTMDDTAVFVSVVGKKEAVPGQDFFPLTVNYQERTYAAGKIPGGFFKREGRPSEGETLTARLIDRPIRPLFPEGFNNEVQVIATVVSVNPDVQPDIPTMIGTSAALAISGIPFNGPIGAARVGHIDGQLVLNPSNTELNASRLDLVVAGTESAVLMVESEADNLTEEEMLSAVVFGHDQQQAVIKAINEFAAEVATPSWNWVAPEANTALNEKVADLAEAKLVEAYKITEKMARYDRIHEIAAEVNAVILAEDPEADAKEIHTIFHDLEKTVVRRSIIAGNPRIDGREKDMVRALDVRTGVLPRTHGSSLFTRGETQALVTATLGTQRDAQIIDELTGEKKDYFLLHYNFPPYCVGETGFVGSPKRREIGHGKLAKRGIAAVMPSIDEFPYTVRVVSEITESNGSSSMASVCGTSLALMDAGVPIKASVAGIAMGLVKEGDDFVVLSDILGDEDHLGDMDFKVAGTSTGITALQMDIKIEGITKEIMQIALNQAQGARKHILSVMDQAISGARDDISEFAPRIHTMKISADKIKDVIGKGGAVIRALTEETGTTIEIEDDGTIKIAATEGAAAKEAIRRIQEITAEVEVGVIYTGKVARLADFGAFVTILPGKDGLVHISQIADKRVEKVSDYLTEGQEVQVKVLEIDRQGRVRLSMKEAVEKPVEAEAPAAEEE</sequence>